<feature type="chain" id="PRO_1000093920" description="Holo-[acyl-carrier-protein] synthase">
    <location>
        <begin position="1"/>
        <end position="118"/>
    </location>
</feature>
<feature type="binding site" evidence="1">
    <location>
        <position position="8"/>
    </location>
    <ligand>
        <name>Mg(2+)</name>
        <dbReference type="ChEBI" id="CHEBI:18420"/>
    </ligand>
</feature>
<feature type="binding site" evidence="1">
    <location>
        <position position="58"/>
    </location>
    <ligand>
        <name>Mg(2+)</name>
        <dbReference type="ChEBI" id="CHEBI:18420"/>
    </ligand>
</feature>
<protein>
    <recommendedName>
        <fullName evidence="1">Holo-[acyl-carrier-protein] synthase</fullName>
        <shortName evidence="1">Holo-ACP synthase</shortName>
        <ecNumber evidence="1">2.7.8.7</ecNumber>
    </recommendedName>
    <alternativeName>
        <fullName evidence="1">4'-phosphopantetheinyl transferase AcpS</fullName>
    </alternativeName>
</protein>
<organism>
    <name type="scientific">Streptococcus equi subsp. zooepidemicus (strain MGCS10565)</name>
    <dbReference type="NCBI Taxonomy" id="552526"/>
    <lineage>
        <taxon>Bacteria</taxon>
        <taxon>Bacillati</taxon>
        <taxon>Bacillota</taxon>
        <taxon>Bacilli</taxon>
        <taxon>Lactobacillales</taxon>
        <taxon>Streptococcaceae</taxon>
        <taxon>Streptococcus</taxon>
    </lineage>
</organism>
<keyword id="KW-0963">Cytoplasm</keyword>
<keyword id="KW-0275">Fatty acid biosynthesis</keyword>
<keyword id="KW-0276">Fatty acid metabolism</keyword>
<keyword id="KW-0444">Lipid biosynthesis</keyword>
<keyword id="KW-0443">Lipid metabolism</keyword>
<keyword id="KW-0460">Magnesium</keyword>
<keyword id="KW-0479">Metal-binding</keyword>
<keyword id="KW-0808">Transferase</keyword>
<sequence length="118" mass="13060">MIVGHGIDLQDISAIEKVYLRNARFARKVLTDKELALFEQFSHNRKMTYLAGRWAGKEAFSKAMGTGIGQLTFQDIEIINDSKGRPVITKSPFQGKAFISISHSGGYVQASVILEDLA</sequence>
<dbReference type="EC" id="2.7.8.7" evidence="1"/>
<dbReference type="EMBL" id="CP001129">
    <property type="protein sequence ID" value="ACG61744.1"/>
    <property type="molecule type" value="Genomic_DNA"/>
</dbReference>
<dbReference type="RefSeq" id="WP_012515020.1">
    <property type="nucleotide sequence ID" value="NC_011134.1"/>
</dbReference>
<dbReference type="SMR" id="B4U177"/>
<dbReference type="KEGG" id="sez:Sez_0368"/>
<dbReference type="HOGENOM" id="CLU_089696_1_2_9"/>
<dbReference type="Proteomes" id="UP000001873">
    <property type="component" value="Chromosome"/>
</dbReference>
<dbReference type="GO" id="GO:0005737">
    <property type="term" value="C:cytoplasm"/>
    <property type="evidence" value="ECO:0007669"/>
    <property type="project" value="UniProtKB-SubCell"/>
</dbReference>
<dbReference type="GO" id="GO:0008897">
    <property type="term" value="F:holo-[acyl-carrier-protein] synthase activity"/>
    <property type="evidence" value="ECO:0007669"/>
    <property type="project" value="UniProtKB-UniRule"/>
</dbReference>
<dbReference type="GO" id="GO:0000287">
    <property type="term" value="F:magnesium ion binding"/>
    <property type="evidence" value="ECO:0007669"/>
    <property type="project" value="UniProtKB-UniRule"/>
</dbReference>
<dbReference type="GO" id="GO:0006633">
    <property type="term" value="P:fatty acid biosynthetic process"/>
    <property type="evidence" value="ECO:0007669"/>
    <property type="project" value="UniProtKB-UniRule"/>
</dbReference>
<dbReference type="Gene3D" id="3.90.470.20">
    <property type="entry name" value="4'-phosphopantetheinyl transferase domain"/>
    <property type="match status" value="1"/>
</dbReference>
<dbReference type="HAMAP" id="MF_00101">
    <property type="entry name" value="AcpS"/>
    <property type="match status" value="1"/>
</dbReference>
<dbReference type="InterPro" id="IPR008278">
    <property type="entry name" value="4-PPantetheinyl_Trfase_dom"/>
</dbReference>
<dbReference type="InterPro" id="IPR037143">
    <property type="entry name" value="4-PPantetheinyl_Trfase_dom_sf"/>
</dbReference>
<dbReference type="InterPro" id="IPR002582">
    <property type="entry name" value="ACPS"/>
</dbReference>
<dbReference type="InterPro" id="IPR004568">
    <property type="entry name" value="Ppantetheine-prot_Trfase_dom"/>
</dbReference>
<dbReference type="NCBIfam" id="TIGR00516">
    <property type="entry name" value="acpS"/>
    <property type="match status" value="1"/>
</dbReference>
<dbReference type="NCBIfam" id="TIGR00556">
    <property type="entry name" value="pantethn_trn"/>
    <property type="match status" value="1"/>
</dbReference>
<dbReference type="Pfam" id="PF01648">
    <property type="entry name" value="ACPS"/>
    <property type="match status" value="1"/>
</dbReference>
<dbReference type="SUPFAM" id="SSF56214">
    <property type="entry name" value="4'-phosphopantetheinyl transferase"/>
    <property type="match status" value="1"/>
</dbReference>
<accession>B4U177</accession>
<evidence type="ECO:0000255" key="1">
    <source>
        <dbReference type="HAMAP-Rule" id="MF_00101"/>
    </source>
</evidence>
<name>ACPS_STREM</name>
<proteinExistence type="inferred from homology"/>
<comment type="function">
    <text evidence="1">Transfers the 4'-phosphopantetheine moiety from coenzyme A to a Ser of acyl-carrier-protein.</text>
</comment>
<comment type="catalytic activity">
    <reaction evidence="1">
        <text>apo-[ACP] + CoA = holo-[ACP] + adenosine 3',5'-bisphosphate + H(+)</text>
        <dbReference type="Rhea" id="RHEA:12068"/>
        <dbReference type="Rhea" id="RHEA-COMP:9685"/>
        <dbReference type="Rhea" id="RHEA-COMP:9690"/>
        <dbReference type="ChEBI" id="CHEBI:15378"/>
        <dbReference type="ChEBI" id="CHEBI:29999"/>
        <dbReference type="ChEBI" id="CHEBI:57287"/>
        <dbReference type="ChEBI" id="CHEBI:58343"/>
        <dbReference type="ChEBI" id="CHEBI:64479"/>
        <dbReference type="EC" id="2.7.8.7"/>
    </reaction>
</comment>
<comment type="cofactor">
    <cofactor evidence="1">
        <name>Mg(2+)</name>
        <dbReference type="ChEBI" id="CHEBI:18420"/>
    </cofactor>
</comment>
<comment type="subcellular location">
    <subcellularLocation>
        <location evidence="1">Cytoplasm</location>
    </subcellularLocation>
</comment>
<comment type="similarity">
    <text evidence="1">Belongs to the P-Pant transferase superfamily. AcpS family.</text>
</comment>
<reference key="1">
    <citation type="journal article" date="2008" name="PLoS ONE">
        <title>Genome sequence of a lancefield group C Streptococcus zooepidemicus strain causing epidemic nephritis: new information about an old disease.</title>
        <authorList>
            <person name="Beres S.B."/>
            <person name="Sesso R."/>
            <person name="Pinto S.W.L."/>
            <person name="Hoe N.P."/>
            <person name="Porcella S.F."/>
            <person name="Deleo F.R."/>
            <person name="Musser J.M."/>
        </authorList>
    </citation>
    <scope>NUCLEOTIDE SEQUENCE [LARGE SCALE GENOMIC DNA]</scope>
    <source>
        <strain>MGCS10565</strain>
    </source>
</reference>
<gene>
    <name evidence="1" type="primary">acpS</name>
    <name type="ordered locus">Sez_0368</name>
</gene>